<name>PDXH_KINRD</name>
<keyword id="KW-0285">Flavoprotein</keyword>
<keyword id="KW-0288">FMN</keyword>
<keyword id="KW-0560">Oxidoreductase</keyword>
<keyword id="KW-0664">Pyridoxine biosynthesis</keyword>
<keyword id="KW-1185">Reference proteome</keyword>
<organism>
    <name type="scientific">Kineococcus radiotolerans (strain ATCC BAA-149 / DSM 14245 / SRS30216)</name>
    <dbReference type="NCBI Taxonomy" id="266940"/>
    <lineage>
        <taxon>Bacteria</taxon>
        <taxon>Bacillati</taxon>
        <taxon>Actinomycetota</taxon>
        <taxon>Actinomycetes</taxon>
        <taxon>Kineosporiales</taxon>
        <taxon>Kineosporiaceae</taxon>
        <taxon>Kineococcus</taxon>
    </lineage>
</organism>
<gene>
    <name evidence="1" type="primary">pdxH</name>
    <name type="ordered locus">Krad_3597</name>
</gene>
<proteinExistence type="inferred from homology"/>
<dbReference type="EC" id="1.4.3.5" evidence="1"/>
<dbReference type="EMBL" id="CP000750">
    <property type="protein sequence ID" value="ABS05060.1"/>
    <property type="molecule type" value="Genomic_DNA"/>
</dbReference>
<dbReference type="RefSeq" id="WP_012086678.1">
    <property type="nucleotide sequence ID" value="NC_009664.2"/>
</dbReference>
<dbReference type="SMR" id="A6WE21"/>
<dbReference type="STRING" id="266940.Krad_3597"/>
<dbReference type="KEGG" id="kra:Krad_3597"/>
<dbReference type="eggNOG" id="COG0259">
    <property type="taxonomic scope" value="Bacteria"/>
</dbReference>
<dbReference type="HOGENOM" id="CLU_032263_2_2_11"/>
<dbReference type="OrthoDB" id="9780392at2"/>
<dbReference type="UniPathway" id="UPA01068">
    <property type="reaction ID" value="UER00304"/>
</dbReference>
<dbReference type="UniPathway" id="UPA01068">
    <property type="reaction ID" value="UER00305"/>
</dbReference>
<dbReference type="Proteomes" id="UP000001116">
    <property type="component" value="Chromosome"/>
</dbReference>
<dbReference type="GO" id="GO:0010181">
    <property type="term" value="F:FMN binding"/>
    <property type="evidence" value="ECO:0007669"/>
    <property type="project" value="UniProtKB-UniRule"/>
</dbReference>
<dbReference type="GO" id="GO:0004733">
    <property type="term" value="F:pyridoxamine phosphate oxidase activity"/>
    <property type="evidence" value="ECO:0007669"/>
    <property type="project" value="UniProtKB-UniRule"/>
</dbReference>
<dbReference type="GO" id="GO:0008615">
    <property type="term" value="P:pyridoxine biosynthetic process"/>
    <property type="evidence" value="ECO:0007669"/>
    <property type="project" value="UniProtKB-KW"/>
</dbReference>
<dbReference type="Gene3D" id="2.30.110.10">
    <property type="entry name" value="Electron Transport, Fmn-binding Protein, Chain A"/>
    <property type="match status" value="1"/>
</dbReference>
<dbReference type="HAMAP" id="MF_01629">
    <property type="entry name" value="PdxH"/>
    <property type="match status" value="1"/>
</dbReference>
<dbReference type="InterPro" id="IPR000659">
    <property type="entry name" value="Pyridox_Oxase"/>
</dbReference>
<dbReference type="InterPro" id="IPR019740">
    <property type="entry name" value="Pyridox_Oxase_CS"/>
</dbReference>
<dbReference type="InterPro" id="IPR011576">
    <property type="entry name" value="Pyridox_Oxase_N"/>
</dbReference>
<dbReference type="InterPro" id="IPR019576">
    <property type="entry name" value="Pyridoxamine_oxidase_dimer_C"/>
</dbReference>
<dbReference type="InterPro" id="IPR012349">
    <property type="entry name" value="Split_barrel_FMN-bd"/>
</dbReference>
<dbReference type="NCBIfam" id="TIGR00558">
    <property type="entry name" value="pdxH"/>
    <property type="match status" value="1"/>
</dbReference>
<dbReference type="NCBIfam" id="NF004231">
    <property type="entry name" value="PRK05679.1"/>
    <property type="match status" value="1"/>
</dbReference>
<dbReference type="PANTHER" id="PTHR10851:SF0">
    <property type="entry name" value="PYRIDOXINE-5'-PHOSPHATE OXIDASE"/>
    <property type="match status" value="1"/>
</dbReference>
<dbReference type="PANTHER" id="PTHR10851">
    <property type="entry name" value="PYRIDOXINE-5-PHOSPHATE OXIDASE"/>
    <property type="match status" value="1"/>
</dbReference>
<dbReference type="Pfam" id="PF10590">
    <property type="entry name" value="PNP_phzG_C"/>
    <property type="match status" value="1"/>
</dbReference>
<dbReference type="Pfam" id="PF01243">
    <property type="entry name" value="PNPOx_N"/>
    <property type="match status" value="1"/>
</dbReference>
<dbReference type="PIRSF" id="PIRSF000190">
    <property type="entry name" value="Pyd_amn-ph_oxd"/>
    <property type="match status" value="1"/>
</dbReference>
<dbReference type="SUPFAM" id="SSF50475">
    <property type="entry name" value="FMN-binding split barrel"/>
    <property type="match status" value="1"/>
</dbReference>
<dbReference type="PROSITE" id="PS01064">
    <property type="entry name" value="PYRIDOX_OXIDASE"/>
    <property type="match status" value="1"/>
</dbReference>
<protein>
    <recommendedName>
        <fullName evidence="1">Pyridoxine/pyridoxamine 5'-phosphate oxidase</fullName>
        <ecNumber evidence="1">1.4.3.5</ecNumber>
    </recommendedName>
    <alternativeName>
        <fullName evidence="1">PNP/PMP oxidase</fullName>
        <shortName evidence="1">PNPOx</shortName>
    </alternativeName>
    <alternativeName>
        <fullName evidence="1">Pyridoxal 5'-phosphate synthase</fullName>
    </alternativeName>
</protein>
<evidence type="ECO:0000255" key="1">
    <source>
        <dbReference type="HAMAP-Rule" id="MF_01629"/>
    </source>
</evidence>
<reference key="1">
    <citation type="journal article" date="2008" name="PLoS ONE">
        <title>Survival in nuclear waste, extreme resistance, and potential applications gleaned from the genome sequence of Kineococcus radiotolerans SRS30216.</title>
        <authorList>
            <person name="Bagwell C.E."/>
            <person name="Bhat S."/>
            <person name="Hawkins G.M."/>
            <person name="Smith B.W."/>
            <person name="Biswas T."/>
            <person name="Hoover T.R."/>
            <person name="Saunders E."/>
            <person name="Han C.S."/>
            <person name="Tsodikov O.V."/>
            <person name="Shimkets L.J."/>
        </authorList>
    </citation>
    <scope>NUCLEOTIDE SEQUENCE [LARGE SCALE GENOMIC DNA]</scope>
    <source>
        <strain>ATCC BAA-149 / DSM 14245 / SRS30216</strain>
    </source>
</reference>
<accession>A6WE21</accession>
<comment type="function">
    <text evidence="1">Catalyzes the oxidation of either pyridoxine 5'-phosphate (PNP) or pyridoxamine 5'-phosphate (PMP) into pyridoxal 5'-phosphate (PLP).</text>
</comment>
<comment type="catalytic activity">
    <reaction evidence="1">
        <text>pyridoxamine 5'-phosphate + O2 + H2O = pyridoxal 5'-phosphate + H2O2 + NH4(+)</text>
        <dbReference type="Rhea" id="RHEA:15817"/>
        <dbReference type="ChEBI" id="CHEBI:15377"/>
        <dbReference type="ChEBI" id="CHEBI:15379"/>
        <dbReference type="ChEBI" id="CHEBI:16240"/>
        <dbReference type="ChEBI" id="CHEBI:28938"/>
        <dbReference type="ChEBI" id="CHEBI:58451"/>
        <dbReference type="ChEBI" id="CHEBI:597326"/>
        <dbReference type="EC" id="1.4.3.5"/>
    </reaction>
</comment>
<comment type="catalytic activity">
    <reaction evidence="1">
        <text>pyridoxine 5'-phosphate + O2 = pyridoxal 5'-phosphate + H2O2</text>
        <dbReference type="Rhea" id="RHEA:15149"/>
        <dbReference type="ChEBI" id="CHEBI:15379"/>
        <dbReference type="ChEBI" id="CHEBI:16240"/>
        <dbReference type="ChEBI" id="CHEBI:58589"/>
        <dbReference type="ChEBI" id="CHEBI:597326"/>
        <dbReference type="EC" id="1.4.3.5"/>
    </reaction>
</comment>
<comment type="cofactor">
    <cofactor evidence="1">
        <name>FMN</name>
        <dbReference type="ChEBI" id="CHEBI:58210"/>
    </cofactor>
    <text evidence="1">Binds 1 FMN per subunit.</text>
</comment>
<comment type="pathway">
    <text evidence="1">Cofactor metabolism; pyridoxal 5'-phosphate salvage; pyridoxal 5'-phosphate from pyridoxamine 5'-phosphate: step 1/1.</text>
</comment>
<comment type="pathway">
    <text evidence="1">Cofactor metabolism; pyridoxal 5'-phosphate salvage; pyridoxal 5'-phosphate from pyridoxine 5'-phosphate: step 1/1.</text>
</comment>
<comment type="subunit">
    <text evidence="1">Homodimer.</text>
</comment>
<comment type="similarity">
    <text evidence="1">Belongs to the pyridoxamine 5'-phosphate oxidase family.</text>
</comment>
<feature type="chain" id="PRO_0000335788" description="Pyridoxine/pyridoxamine 5'-phosphate oxidase">
    <location>
        <begin position="1"/>
        <end position="223"/>
    </location>
</feature>
<feature type="binding site" evidence="1">
    <location>
        <begin position="8"/>
        <end position="11"/>
    </location>
    <ligand>
        <name>substrate</name>
    </ligand>
</feature>
<feature type="binding site" evidence="1">
    <location>
        <begin position="60"/>
        <end position="65"/>
    </location>
    <ligand>
        <name>FMN</name>
        <dbReference type="ChEBI" id="CHEBI:58210"/>
    </ligand>
</feature>
<feature type="binding site" evidence="1">
    <location>
        <position position="65"/>
    </location>
    <ligand>
        <name>substrate</name>
    </ligand>
</feature>
<feature type="binding site" evidence="1">
    <location>
        <begin position="75"/>
        <end position="76"/>
    </location>
    <ligand>
        <name>FMN</name>
        <dbReference type="ChEBI" id="CHEBI:58210"/>
    </ligand>
</feature>
<feature type="binding site" evidence="1">
    <location>
        <position position="81"/>
    </location>
    <ligand>
        <name>FMN</name>
        <dbReference type="ChEBI" id="CHEBI:58210"/>
    </ligand>
</feature>
<feature type="binding site" evidence="1">
    <location>
        <position position="82"/>
    </location>
    <ligand>
        <name>FMN</name>
        <dbReference type="ChEBI" id="CHEBI:58210"/>
    </ligand>
</feature>
<feature type="binding site" evidence="1">
    <location>
        <position position="104"/>
    </location>
    <ligand>
        <name>FMN</name>
        <dbReference type="ChEBI" id="CHEBI:58210"/>
    </ligand>
</feature>
<feature type="binding site" evidence="1">
    <location>
        <position position="122"/>
    </location>
    <ligand>
        <name>substrate</name>
    </ligand>
</feature>
<feature type="binding site" evidence="1">
    <location>
        <position position="126"/>
    </location>
    <ligand>
        <name>substrate</name>
    </ligand>
</feature>
<feature type="binding site" evidence="1">
    <location>
        <position position="130"/>
    </location>
    <ligand>
        <name>substrate</name>
    </ligand>
</feature>
<feature type="binding site" evidence="1">
    <location>
        <begin position="139"/>
        <end position="140"/>
    </location>
    <ligand>
        <name>FMN</name>
        <dbReference type="ChEBI" id="CHEBI:58210"/>
    </ligand>
</feature>
<feature type="binding site" evidence="1">
    <location>
        <position position="188"/>
    </location>
    <ligand>
        <name>FMN</name>
        <dbReference type="ChEBI" id="CHEBI:58210"/>
    </ligand>
</feature>
<feature type="binding site" evidence="1">
    <location>
        <begin position="194"/>
        <end position="196"/>
    </location>
    <ligand>
        <name>substrate</name>
    </ligand>
</feature>
<feature type="binding site" evidence="1">
    <location>
        <position position="198"/>
    </location>
    <ligand>
        <name>FMN</name>
        <dbReference type="ChEBI" id="CHEBI:58210"/>
    </ligand>
</feature>
<sequence length="223" mass="24864">MEDPAGRRVDYGDRRFDEHDLAPTPLAQFQAWYSDAVEAGVVEPNAMTVATAGADGVSARTVLLKAVDGRGFVFYTNQRSRKALAIAHDPRVALLFTWHGTHRQVAVRGTAEEVPRAETEAYFASRPYGSRIGAWVSEQSRTTPSAAALHEREAQLRERWPDTGSPDDVPTPPHWGGYLVRALEVEFWQGRTSRLHDRLVLVAADGPARLDDPAPWRTERRQP</sequence>